<proteinExistence type="inferred from homology"/>
<sequence>MRRAEIERETKETYVKIALNLDGEGSFLGDFPIPYYKHLISTLCFYAGWDVEINAKGDIEVDPHHLIEDTGITLGKAFNSAILKSSFLRFSNKVIPMDEALVMVVVDISGRPYLEIKDDKEILKGRLIKEFLRGFVNNSQMTLHIWILSGENLHHVEEAIFKALGLALGEASKEVSNLKSTKGKIW</sequence>
<name>HIS7_DICT6</name>
<feature type="chain" id="PRO_1000117082" description="Imidazoleglycerol-phosphate dehydratase">
    <location>
        <begin position="1"/>
        <end position="186"/>
    </location>
</feature>
<keyword id="KW-0028">Amino-acid biosynthesis</keyword>
<keyword id="KW-0963">Cytoplasm</keyword>
<keyword id="KW-0368">Histidine biosynthesis</keyword>
<keyword id="KW-0456">Lyase</keyword>
<accession>B5YE87</accession>
<evidence type="ECO:0000255" key="1">
    <source>
        <dbReference type="HAMAP-Rule" id="MF_00076"/>
    </source>
</evidence>
<reference key="1">
    <citation type="journal article" date="2014" name="Genome Announc.">
        <title>Complete Genome Sequence of the Extreme Thermophile Dictyoglomus thermophilum H-6-12.</title>
        <authorList>
            <person name="Coil D.A."/>
            <person name="Badger J.H."/>
            <person name="Forberger H.C."/>
            <person name="Riggs F."/>
            <person name="Madupu R."/>
            <person name="Fedorova N."/>
            <person name="Ward N."/>
            <person name="Robb F.T."/>
            <person name="Eisen J.A."/>
        </authorList>
    </citation>
    <scope>NUCLEOTIDE SEQUENCE [LARGE SCALE GENOMIC DNA]</scope>
    <source>
        <strain>ATCC 35947 / DSM 3960 / H-6-12</strain>
    </source>
</reference>
<comment type="catalytic activity">
    <reaction evidence="1">
        <text>D-erythro-1-(imidazol-4-yl)glycerol 3-phosphate = 3-(imidazol-4-yl)-2-oxopropyl phosphate + H2O</text>
        <dbReference type="Rhea" id="RHEA:11040"/>
        <dbReference type="ChEBI" id="CHEBI:15377"/>
        <dbReference type="ChEBI" id="CHEBI:57766"/>
        <dbReference type="ChEBI" id="CHEBI:58278"/>
        <dbReference type="EC" id="4.2.1.19"/>
    </reaction>
</comment>
<comment type="pathway">
    <text evidence="1">Amino-acid biosynthesis; L-histidine biosynthesis; L-histidine from 5-phospho-alpha-D-ribose 1-diphosphate: step 6/9.</text>
</comment>
<comment type="subcellular location">
    <subcellularLocation>
        <location evidence="1">Cytoplasm</location>
    </subcellularLocation>
</comment>
<comment type="similarity">
    <text evidence="1">Belongs to the imidazoleglycerol-phosphate dehydratase family.</text>
</comment>
<organism>
    <name type="scientific">Dictyoglomus thermophilum (strain ATCC 35947 / DSM 3960 / H-6-12)</name>
    <dbReference type="NCBI Taxonomy" id="309799"/>
    <lineage>
        <taxon>Bacteria</taxon>
        <taxon>Pseudomonadati</taxon>
        <taxon>Dictyoglomota</taxon>
        <taxon>Dictyoglomia</taxon>
        <taxon>Dictyoglomales</taxon>
        <taxon>Dictyoglomaceae</taxon>
        <taxon>Dictyoglomus</taxon>
    </lineage>
</organism>
<dbReference type="EC" id="4.2.1.19" evidence="1"/>
<dbReference type="EMBL" id="CP001146">
    <property type="protein sequence ID" value="ACI19786.1"/>
    <property type="molecule type" value="Genomic_DNA"/>
</dbReference>
<dbReference type="RefSeq" id="WP_012548418.1">
    <property type="nucleotide sequence ID" value="NC_011297.1"/>
</dbReference>
<dbReference type="SMR" id="B5YE87"/>
<dbReference type="STRING" id="309799.DICTH_0995"/>
<dbReference type="PaxDb" id="309799-DICTH_0995"/>
<dbReference type="KEGG" id="dth:DICTH_0995"/>
<dbReference type="eggNOG" id="COG0131">
    <property type="taxonomic scope" value="Bacteria"/>
</dbReference>
<dbReference type="HOGENOM" id="CLU_044308_2_1_0"/>
<dbReference type="OrthoDB" id="9813612at2"/>
<dbReference type="UniPathway" id="UPA00031">
    <property type="reaction ID" value="UER00011"/>
</dbReference>
<dbReference type="Proteomes" id="UP000001733">
    <property type="component" value="Chromosome"/>
</dbReference>
<dbReference type="GO" id="GO:0005737">
    <property type="term" value="C:cytoplasm"/>
    <property type="evidence" value="ECO:0007669"/>
    <property type="project" value="UniProtKB-SubCell"/>
</dbReference>
<dbReference type="GO" id="GO:0004424">
    <property type="term" value="F:imidazoleglycerol-phosphate dehydratase activity"/>
    <property type="evidence" value="ECO:0007669"/>
    <property type="project" value="UniProtKB-UniRule"/>
</dbReference>
<dbReference type="GO" id="GO:0000105">
    <property type="term" value="P:L-histidine biosynthetic process"/>
    <property type="evidence" value="ECO:0007669"/>
    <property type="project" value="UniProtKB-UniRule"/>
</dbReference>
<dbReference type="FunFam" id="3.30.230.40:FF:000001">
    <property type="entry name" value="Imidazoleglycerol-phosphate dehydratase HisB"/>
    <property type="match status" value="1"/>
</dbReference>
<dbReference type="FunFam" id="3.30.230.40:FF:000003">
    <property type="entry name" value="Imidazoleglycerol-phosphate dehydratase HisB"/>
    <property type="match status" value="1"/>
</dbReference>
<dbReference type="Gene3D" id="3.30.230.40">
    <property type="entry name" value="Imidazole glycerol phosphate dehydratase, domain 1"/>
    <property type="match status" value="2"/>
</dbReference>
<dbReference type="HAMAP" id="MF_00076">
    <property type="entry name" value="HisB"/>
    <property type="match status" value="1"/>
</dbReference>
<dbReference type="InterPro" id="IPR038494">
    <property type="entry name" value="IGPD_sf"/>
</dbReference>
<dbReference type="InterPro" id="IPR000807">
    <property type="entry name" value="ImidazoleglycerolP_deHydtase"/>
</dbReference>
<dbReference type="InterPro" id="IPR020565">
    <property type="entry name" value="ImidazoleglycerP_deHydtase_CS"/>
</dbReference>
<dbReference type="InterPro" id="IPR020568">
    <property type="entry name" value="Ribosomal_Su5_D2-typ_SF"/>
</dbReference>
<dbReference type="NCBIfam" id="NF002114">
    <property type="entry name" value="PRK00951.2-4"/>
    <property type="match status" value="1"/>
</dbReference>
<dbReference type="PANTHER" id="PTHR23133:SF2">
    <property type="entry name" value="IMIDAZOLEGLYCEROL-PHOSPHATE DEHYDRATASE"/>
    <property type="match status" value="1"/>
</dbReference>
<dbReference type="PANTHER" id="PTHR23133">
    <property type="entry name" value="IMIDAZOLEGLYCEROL-PHOSPHATE DEHYDRATASE HIS7"/>
    <property type="match status" value="1"/>
</dbReference>
<dbReference type="Pfam" id="PF00475">
    <property type="entry name" value="IGPD"/>
    <property type="match status" value="1"/>
</dbReference>
<dbReference type="SUPFAM" id="SSF54211">
    <property type="entry name" value="Ribosomal protein S5 domain 2-like"/>
    <property type="match status" value="2"/>
</dbReference>
<dbReference type="PROSITE" id="PS00954">
    <property type="entry name" value="IGP_DEHYDRATASE_1"/>
    <property type="match status" value="1"/>
</dbReference>
<dbReference type="PROSITE" id="PS00955">
    <property type="entry name" value="IGP_DEHYDRATASE_2"/>
    <property type="match status" value="1"/>
</dbReference>
<gene>
    <name evidence="1" type="primary">hisB</name>
    <name type="ordered locus">DICTH_0995</name>
</gene>
<protein>
    <recommendedName>
        <fullName evidence="1">Imidazoleglycerol-phosphate dehydratase</fullName>
        <shortName evidence="1">IGPD</shortName>
        <ecNumber evidence="1">4.2.1.19</ecNumber>
    </recommendedName>
</protein>